<organism>
    <name type="scientific">Rhizobium meliloti (strain 1021)</name>
    <name type="common">Ensifer meliloti</name>
    <name type="synonym">Sinorhizobium meliloti</name>
    <dbReference type="NCBI Taxonomy" id="266834"/>
    <lineage>
        <taxon>Bacteria</taxon>
        <taxon>Pseudomonadati</taxon>
        <taxon>Pseudomonadota</taxon>
        <taxon>Alphaproteobacteria</taxon>
        <taxon>Hyphomicrobiales</taxon>
        <taxon>Rhizobiaceae</taxon>
        <taxon>Sinorhizobium/Ensifer group</taxon>
        <taxon>Sinorhizobium</taxon>
    </lineage>
</organism>
<keyword id="KW-0067">ATP-binding</keyword>
<keyword id="KW-0963">Cytoplasm</keyword>
<keyword id="KW-0235">DNA replication</keyword>
<keyword id="KW-0238">DNA-binding</keyword>
<keyword id="KW-0446">Lipid-binding</keyword>
<keyword id="KW-0547">Nucleotide-binding</keyword>
<keyword id="KW-1185">Reference proteome</keyword>
<name>DNAA_RHIME</name>
<reference key="1">
    <citation type="journal article" date="1995" name="J. Bacteriol.">
        <title>The dnaA gene of Rhizobium meliloti lies within an unusual gene arrangement.</title>
        <authorList>
            <person name="Margolin W."/>
            <person name="Bramhill D."/>
            <person name="Long S.R."/>
        </authorList>
    </citation>
    <scope>NUCLEOTIDE SEQUENCE [GENOMIC DNA]</scope>
    <source>
        <strain>1021</strain>
    </source>
</reference>
<reference key="2">
    <citation type="journal article" date="2001" name="Proc. Natl. Acad. Sci. U.S.A.">
        <title>Analysis of the chromosome sequence of the legume symbiont Sinorhizobium meliloti strain 1021.</title>
        <authorList>
            <person name="Capela D."/>
            <person name="Barloy-Hubler F."/>
            <person name="Gouzy J."/>
            <person name="Bothe G."/>
            <person name="Ampe F."/>
            <person name="Batut J."/>
            <person name="Boistard P."/>
            <person name="Becker A."/>
            <person name="Boutry M."/>
            <person name="Cadieu E."/>
            <person name="Dreano S."/>
            <person name="Gloux S."/>
            <person name="Godrie T."/>
            <person name="Goffeau A."/>
            <person name="Kahn D."/>
            <person name="Kiss E."/>
            <person name="Lelaure V."/>
            <person name="Masuy D."/>
            <person name="Pohl T."/>
            <person name="Portetelle D."/>
            <person name="Puehler A."/>
            <person name="Purnelle B."/>
            <person name="Ramsperger U."/>
            <person name="Renard C."/>
            <person name="Thebault P."/>
            <person name="Vandenbol M."/>
            <person name="Weidner S."/>
            <person name="Galibert F."/>
        </authorList>
    </citation>
    <scope>NUCLEOTIDE SEQUENCE [LARGE SCALE GENOMIC DNA]</scope>
    <source>
        <strain>1021</strain>
    </source>
</reference>
<reference key="3">
    <citation type="journal article" date="2001" name="Science">
        <title>The composite genome of the legume symbiont Sinorhizobium meliloti.</title>
        <authorList>
            <person name="Galibert F."/>
            <person name="Finan T.M."/>
            <person name="Long S.R."/>
            <person name="Puehler A."/>
            <person name="Abola P."/>
            <person name="Ampe F."/>
            <person name="Barloy-Hubler F."/>
            <person name="Barnett M.J."/>
            <person name="Becker A."/>
            <person name="Boistard P."/>
            <person name="Bothe G."/>
            <person name="Boutry M."/>
            <person name="Bowser L."/>
            <person name="Buhrmester J."/>
            <person name="Cadieu E."/>
            <person name="Capela D."/>
            <person name="Chain P."/>
            <person name="Cowie A."/>
            <person name="Davis R.W."/>
            <person name="Dreano S."/>
            <person name="Federspiel N.A."/>
            <person name="Fisher R.F."/>
            <person name="Gloux S."/>
            <person name="Godrie T."/>
            <person name="Goffeau A."/>
            <person name="Golding B."/>
            <person name="Gouzy J."/>
            <person name="Gurjal M."/>
            <person name="Hernandez-Lucas I."/>
            <person name="Hong A."/>
            <person name="Huizar L."/>
            <person name="Hyman R.W."/>
            <person name="Jones T."/>
            <person name="Kahn D."/>
            <person name="Kahn M.L."/>
            <person name="Kalman S."/>
            <person name="Keating D.H."/>
            <person name="Kiss E."/>
            <person name="Komp C."/>
            <person name="Lelaure V."/>
            <person name="Masuy D."/>
            <person name="Palm C."/>
            <person name="Peck M.C."/>
            <person name="Pohl T.M."/>
            <person name="Portetelle D."/>
            <person name="Purnelle B."/>
            <person name="Ramsperger U."/>
            <person name="Surzycki R."/>
            <person name="Thebault P."/>
            <person name="Vandenbol M."/>
            <person name="Vorhoelter F.J."/>
            <person name="Weidner S."/>
            <person name="Wells D.H."/>
            <person name="Wong K."/>
            <person name="Yeh K.-C."/>
            <person name="Batut J."/>
        </authorList>
    </citation>
    <scope>NUCLEOTIDE SEQUENCE [LARGE SCALE GENOMIC DNA]</scope>
    <source>
        <strain>1021</strain>
    </source>
</reference>
<proteinExistence type="inferred from homology"/>
<dbReference type="EMBL" id="L25439">
    <property type="protein sequence ID" value="AAA26258.1"/>
    <property type="status" value="ALT_INIT"/>
    <property type="molecule type" value="Genomic_DNA"/>
</dbReference>
<dbReference type="EMBL" id="L39265">
    <property type="protein sequence ID" value="AAA91097.1"/>
    <property type="status" value="ALT_INIT"/>
    <property type="molecule type" value="Genomic_DNA"/>
</dbReference>
<dbReference type="EMBL" id="AL591688">
    <property type="protein sequence ID" value="CAC41805.1"/>
    <property type="status" value="ALT_INIT"/>
    <property type="molecule type" value="Genomic_DNA"/>
</dbReference>
<dbReference type="RefSeq" id="NP_384474.1">
    <property type="nucleotide sequence ID" value="NC_003047.1"/>
</dbReference>
<dbReference type="SMR" id="P35890"/>
<dbReference type="EnsemblBacteria" id="CAC41805">
    <property type="protein sequence ID" value="CAC41805"/>
    <property type="gene ID" value="SMc01167"/>
</dbReference>
<dbReference type="KEGG" id="sme:SMc01167"/>
<dbReference type="PATRIC" id="fig|266834.11.peg.1740"/>
<dbReference type="eggNOG" id="COG0593">
    <property type="taxonomic scope" value="Bacteria"/>
</dbReference>
<dbReference type="HOGENOM" id="CLU_026910_3_0_5"/>
<dbReference type="OrthoDB" id="9807019at2"/>
<dbReference type="Proteomes" id="UP000001976">
    <property type="component" value="Chromosome"/>
</dbReference>
<dbReference type="GO" id="GO:0005737">
    <property type="term" value="C:cytoplasm"/>
    <property type="evidence" value="ECO:0007669"/>
    <property type="project" value="UniProtKB-SubCell"/>
</dbReference>
<dbReference type="GO" id="GO:0005886">
    <property type="term" value="C:plasma membrane"/>
    <property type="evidence" value="ECO:0007669"/>
    <property type="project" value="TreeGrafter"/>
</dbReference>
<dbReference type="GO" id="GO:0005524">
    <property type="term" value="F:ATP binding"/>
    <property type="evidence" value="ECO:0007669"/>
    <property type="project" value="UniProtKB-UniRule"/>
</dbReference>
<dbReference type="GO" id="GO:0016887">
    <property type="term" value="F:ATP hydrolysis activity"/>
    <property type="evidence" value="ECO:0007669"/>
    <property type="project" value="InterPro"/>
</dbReference>
<dbReference type="GO" id="GO:0003688">
    <property type="term" value="F:DNA replication origin binding"/>
    <property type="evidence" value="ECO:0007669"/>
    <property type="project" value="UniProtKB-UniRule"/>
</dbReference>
<dbReference type="GO" id="GO:0008289">
    <property type="term" value="F:lipid binding"/>
    <property type="evidence" value="ECO:0007669"/>
    <property type="project" value="UniProtKB-KW"/>
</dbReference>
<dbReference type="GO" id="GO:0006270">
    <property type="term" value="P:DNA replication initiation"/>
    <property type="evidence" value="ECO:0007669"/>
    <property type="project" value="UniProtKB-UniRule"/>
</dbReference>
<dbReference type="GO" id="GO:0006275">
    <property type="term" value="P:regulation of DNA replication"/>
    <property type="evidence" value="ECO:0007669"/>
    <property type="project" value="UniProtKB-UniRule"/>
</dbReference>
<dbReference type="CDD" id="cd06571">
    <property type="entry name" value="Bac_DnaA_C"/>
    <property type="match status" value="1"/>
</dbReference>
<dbReference type="FunFam" id="1.10.1750.10:FF:000002">
    <property type="entry name" value="Chromosomal replication initiator protein DnaA"/>
    <property type="match status" value="1"/>
</dbReference>
<dbReference type="Gene3D" id="1.10.1750.10">
    <property type="match status" value="1"/>
</dbReference>
<dbReference type="Gene3D" id="1.10.8.60">
    <property type="match status" value="1"/>
</dbReference>
<dbReference type="Gene3D" id="3.30.300.180">
    <property type="match status" value="1"/>
</dbReference>
<dbReference type="Gene3D" id="3.40.50.300">
    <property type="entry name" value="P-loop containing nucleotide triphosphate hydrolases"/>
    <property type="match status" value="1"/>
</dbReference>
<dbReference type="HAMAP" id="MF_00377">
    <property type="entry name" value="DnaA_bact"/>
    <property type="match status" value="1"/>
</dbReference>
<dbReference type="InterPro" id="IPR003593">
    <property type="entry name" value="AAA+_ATPase"/>
</dbReference>
<dbReference type="InterPro" id="IPR001957">
    <property type="entry name" value="Chromosome_initiator_DnaA"/>
</dbReference>
<dbReference type="InterPro" id="IPR020591">
    <property type="entry name" value="Chromosome_initiator_DnaA-like"/>
</dbReference>
<dbReference type="InterPro" id="IPR018312">
    <property type="entry name" value="Chromosome_initiator_DnaA_CS"/>
</dbReference>
<dbReference type="InterPro" id="IPR013159">
    <property type="entry name" value="DnaA_C"/>
</dbReference>
<dbReference type="InterPro" id="IPR013317">
    <property type="entry name" value="DnaA_dom"/>
</dbReference>
<dbReference type="InterPro" id="IPR024633">
    <property type="entry name" value="DnaA_N_dom"/>
</dbReference>
<dbReference type="InterPro" id="IPR038454">
    <property type="entry name" value="DnaA_N_sf"/>
</dbReference>
<dbReference type="InterPro" id="IPR027417">
    <property type="entry name" value="P-loop_NTPase"/>
</dbReference>
<dbReference type="InterPro" id="IPR010921">
    <property type="entry name" value="Trp_repressor/repl_initiator"/>
</dbReference>
<dbReference type="NCBIfam" id="TIGR00362">
    <property type="entry name" value="DnaA"/>
    <property type="match status" value="1"/>
</dbReference>
<dbReference type="PANTHER" id="PTHR30050">
    <property type="entry name" value="CHROMOSOMAL REPLICATION INITIATOR PROTEIN DNAA"/>
    <property type="match status" value="1"/>
</dbReference>
<dbReference type="PANTHER" id="PTHR30050:SF2">
    <property type="entry name" value="CHROMOSOMAL REPLICATION INITIATOR PROTEIN DNAA"/>
    <property type="match status" value="1"/>
</dbReference>
<dbReference type="Pfam" id="PF00308">
    <property type="entry name" value="Bac_DnaA"/>
    <property type="match status" value="1"/>
</dbReference>
<dbReference type="Pfam" id="PF08299">
    <property type="entry name" value="Bac_DnaA_C"/>
    <property type="match status" value="1"/>
</dbReference>
<dbReference type="Pfam" id="PF11638">
    <property type="entry name" value="DnaA_N"/>
    <property type="match status" value="1"/>
</dbReference>
<dbReference type="PRINTS" id="PR00051">
    <property type="entry name" value="DNAA"/>
</dbReference>
<dbReference type="SMART" id="SM00382">
    <property type="entry name" value="AAA"/>
    <property type="match status" value="1"/>
</dbReference>
<dbReference type="SMART" id="SM00760">
    <property type="entry name" value="Bac_DnaA_C"/>
    <property type="match status" value="1"/>
</dbReference>
<dbReference type="SUPFAM" id="SSF52540">
    <property type="entry name" value="P-loop containing nucleoside triphosphate hydrolases"/>
    <property type="match status" value="1"/>
</dbReference>
<dbReference type="SUPFAM" id="SSF48295">
    <property type="entry name" value="TrpR-like"/>
    <property type="match status" value="1"/>
</dbReference>
<dbReference type="PROSITE" id="PS01008">
    <property type="entry name" value="DNAA"/>
    <property type="match status" value="1"/>
</dbReference>
<evidence type="ECO:0000255" key="1">
    <source>
        <dbReference type="HAMAP-Rule" id="MF_00377"/>
    </source>
</evidence>
<evidence type="ECO:0000305" key="2"/>
<protein>
    <recommendedName>
        <fullName evidence="1">Chromosomal replication initiator protein DnaA</fullName>
    </recommendedName>
</protein>
<accession>P35890</accession>
<gene>
    <name evidence="1" type="primary">dnaA</name>
    <name type="ordered locus">R00368</name>
    <name type="ORF">SMc01167</name>
</gene>
<comment type="function">
    <text evidence="1">Plays an essential role in the initiation and regulation of chromosomal replication. ATP-DnaA binds to the origin of replication (oriC) to initiate formation of the DNA replication initiation complex once per cell cycle. Binds the DnaA box (a 9 base pair repeat at the origin) and separates the double-stranded (ds)DNA. Forms a right-handed helical filament on oriC DNA; dsDNA binds to the exterior of the filament while single-stranded (ss)DNA is stabiized in the filament's interior. The ATP-DnaA-oriC complex binds and stabilizes one strand of the AT-rich DNA unwinding element (DUE), permitting loading of DNA polymerase. After initiation quickly degrades to an ADP-DnaA complex that is not apt for DNA replication. Binds acidic phospholipids.</text>
</comment>
<comment type="subunit">
    <text evidence="1">Oligomerizes as a right-handed, spiral filament on DNA at oriC.</text>
</comment>
<comment type="subcellular location">
    <subcellularLocation>
        <location evidence="1">Cytoplasm</location>
    </subcellularLocation>
</comment>
<comment type="domain">
    <text evidence="1">Domain I is involved in oligomerization and binding regulators, domain II is flexibile and of varying length in different bacteria, domain III forms the AAA+ region, while domain IV binds dsDNA.</text>
</comment>
<comment type="similarity">
    <text evidence="1">Belongs to the DnaA family.</text>
</comment>
<comment type="sequence caution" evidence="2">
    <conflict type="erroneous initiation">
        <sequence resource="EMBL-CDS" id="AAA26258"/>
    </conflict>
</comment>
<comment type="sequence caution" evidence="2">
    <conflict type="erroneous initiation">
        <sequence resource="EMBL-CDS" id="AAA91097"/>
    </conflict>
</comment>
<comment type="sequence caution" evidence="2">
    <conflict type="erroneous initiation">
        <sequence resource="EMBL-CDS" id="CAC41805"/>
    </conflict>
</comment>
<sequence>MRHDALFERVSARLKAQVGPDVFASWFGRLKLHSVSKSVVRLSVPTTFLKSWINNRYLDLITTLVQQEDSEILKVEILVRTATRGHRPTAPEESVAAAAEAAVVPPSRRSAAPTVAIAAAAVAAAPARPVQAPLFGSPLDQRYGFDSFVEGSSNRVALAAARTIAEAGAGAVRFNPLFIHSSVGLGKTHLLQAIALAALQSARAPRVVYLTAEYFMWRFATAIRDNDALSLKESLRNIDLLIIDDMQFLQGKSIQHEFCHLLNMLLDSAKQVVVAADRAPWELESLDSRVRSRLQGGVAIEMEGPDYEMRLEMLKRRLEAARQDDASLEIPLEILSHVARNVTASGRELEGAFNQLLFRRSFEPQLSIERVDELLGHLVNAGEPRRVRIEDIQRVVAKHYNVSRQELVSNRRTRVIVKPRQIAMYLSKTLTPRSFPEIGRRFGGRDHTTVLHAVRKIEELISADTKLSHEIELLKRLINE</sequence>
<feature type="chain" id="PRO_0000114244" description="Chromosomal replication initiator protein DnaA">
    <location>
        <begin position="1"/>
        <end position="480"/>
    </location>
</feature>
<feature type="region of interest" description="Domain I, interacts with DnaA modulators" evidence="1">
    <location>
        <begin position="1"/>
        <end position="71"/>
    </location>
</feature>
<feature type="region of interest" description="Domain II" evidence="1">
    <location>
        <begin position="71"/>
        <end position="137"/>
    </location>
</feature>
<feature type="region of interest" description="Domain III, AAA+ region" evidence="1">
    <location>
        <begin position="138"/>
        <end position="360"/>
    </location>
</feature>
<feature type="region of interest" description="Domain IV, binds dsDNA" evidence="1">
    <location>
        <begin position="361"/>
        <end position="480"/>
    </location>
</feature>
<feature type="binding site" evidence="1">
    <location>
        <position position="184"/>
    </location>
    <ligand>
        <name>ATP</name>
        <dbReference type="ChEBI" id="CHEBI:30616"/>
    </ligand>
</feature>
<feature type="binding site" evidence="1">
    <location>
        <position position="186"/>
    </location>
    <ligand>
        <name>ATP</name>
        <dbReference type="ChEBI" id="CHEBI:30616"/>
    </ligand>
</feature>
<feature type="binding site" evidence="1">
    <location>
        <position position="187"/>
    </location>
    <ligand>
        <name>ATP</name>
        <dbReference type="ChEBI" id="CHEBI:30616"/>
    </ligand>
</feature>
<feature type="binding site" evidence="1">
    <location>
        <position position="188"/>
    </location>
    <ligand>
        <name>ATP</name>
        <dbReference type="ChEBI" id="CHEBI:30616"/>
    </ligand>
</feature>